<comment type="function">
    <text evidence="1">Protease subunit of a proteasome-like degradation complex believed to be a general protein degrading machinery.</text>
</comment>
<comment type="catalytic activity">
    <reaction evidence="1">
        <text>ATP-dependent cleavage of peptide bonds with broad specificity.</text>
        <dbReference type="EC" id="3.4.25.2"/>
    </reaction>
</comment>
<comment type="activity regulation">
    <text evidence="1">Allosterically activated by HslU binding.</text>
</comment>
<comment type="subunit">
    <text evidence="1">A double ring-shaped homohexamer of HslV is capped on each side by a ring-shaped HslU homohexamer. The assembly of the HslU/HslV complex is dependent on binding of ATP.</text>
</comment>
<comment type="subcellular location">
    <subcellularLocation>
        <location evidence="1">Cytoplasm</location>
    </subcellularLocation>
</comment>
<comment type="similarity">
    <text evidence="1">Belongs to the peptidase T1B family. HslV subfamily.</text>
</comment>
<evidence type="ECO:0000255" key="1">
    <source>
        <dbReference type="HAMAP-Rule" id="MF_00248"/>
    </source>
</evidence>
<accession>Q31IL7</accession>
<reference key="1">
    <citation type="journal article" date="2006" name="PLoS Biol.">
        <title>The genome of deep-sea vent chemolithoautotroph Thiomicrospira crunogena XCL-2.</title>
        <authorList>
            <person name="Scott K.M."/>
            <person name="Sievert S.M."/>
            <person name="Abril F.N."/>
            <person name="Ball L.A."/>
            <person name="Barrett C.J."/>
            <person name="Blake R.A."/>
            <person name="Boller A.J."/>
            <person name="Chain P.S.G."/>
            <person name="Clark J.A."/>
            <person name="Davis C.R."/>
            <person name="Detter C."/>
            <person name="Do K.F."/>
            <person name="Dobrinski K.P."/>
            <person name="Faza B.I."/>
            <person name="Fitzpatrick K.A."/>
            <person name="Freyermuth S.K."/>
            <person name="Harmer T.L."/>
            <person name="Hauser L.J."/>
            <person name="Huegler M."/>
            <person name="Kerfeld C.A."/>
            <person name="Klotz M.G."/>
            <person name="Kong W.W."/>
            <person name="Land M."/>
            <person name="Lapidus A."/>
            <person name="Larimer F.W."/>
            <person name="Longo D.L."/>
            <person name="Lucas S."/>
            <person name="Malfatti S.A."/>
            <person name="Massey S.E."/>
            <person name="Martin D.D."/>
            <person name="McCuddin Z."/>
            <person name="Meyer F."/>
            <person name="Moore J.L."/>
            <person name="Ocampo L.H. Jr."/>
            <person name="Paul J.H."/>
            <person name="Paulsen I.T."/>
            <person name="Reep D.K."/>
            <person name="Ren Q."/>
            <person name="Ross R.L."/>
            <person name="Sato P.Y."/>
            <person name="Thomas P."/>
            <person name="Tinkham L.E."/>
            <person name="Zeruth G.T."/>
        </authorList>
    </citation>
    <scope>NUCLEOTIDE SEQUENCE [LARGE SCALE GENOMIC DNA]</scope>
    <source>
        <strain>DSM 25203 / XCL-2</strain>
    </source>
</reference>
<name>HSLV_HYDCU</name>
<proteinExistence type="inferred from homology"/>
<gene>
    <name evidence="1" type="primary">hslV</name>
    <name type="ordered locus">Tcr_0410</name>
</gene>
<organism>
    <name type="scientific">Hydrogenovibrio crunogenus (strain DSM 25203 / XCL-2)</name>
    <name type="common">Thiomicrospira crunogena</name>
    <dbReference type="NCBI Taxonomy" id="317025"/>
    <lineage>
        <taxon>Bacteria</taxon>
        <taxon>Pseudomonadati</taxon>
        <taxon>Pseudomonadota</taxon>
        <taxon>Gammaproteobacteria</taxon>
        <taxon>Thiotrichales</taxon>
        <taxon>Piscirickettsiaceae</taxon>
        <taxon>Hydrogenovibrio</taxon>
    </lineage>
</organism>
<sequence>MSEQTFHGTTILCAKRNGEMVIGGDGQVTLGHVVMKGNARKVRRLFNGKILAGFAGATADAFTLFERFEGKLQTHNGQLMRAAVEMAKDWRTDRALRKLEAMMLVADADNMLLISGTGDVIEPAHDFISIGSGGSYAHSAAQALMENTDLSAKDVVEKALNIAADLCIYTNHNLTIESLNKED</sequence>
<feature type="chain" id="PRO_0000336803" description="ATP-dependent protease subunit HslV">
    <location>
        <begin position="1"/>
        <end position="183"/>
    </location>
</feature>
<feature type="active site" evidence="1">
    <location>
        <position position="9"/>
    </location>
</feature>
<feature type="binding site" evidence="1">
    <location>
        <position position="164"/>
    </location>
    <ligand>
        <name>Na(+)</name>
        <dbReference type="ChEBI" id="CHEBI:29101"/>
    </ligand>
</feature>
<feature type="binding site" evidence="1">
    <location>
        <position position="167"/>
    </location>
    <ligand>
        <name>Na(+)</name>
        <dbReference type="ChEBI" id="CHEBI:29101"/>
    </ligand>
</feature>
<feature type="binding site" evidence="1">
    <location>
        <position position="170"/>
    </location>
    <ligand>
        <name>Na(+)</name>
        <dbReference type="ChEBI" id="CHEBI:29101"/>
    </ligand>
</feature>
<protein>
    <recommendedName>
        <fullName evidence="1">ATP-dependent protease subunit HslV</fullName>
        <ecNumber evidence="1">3.4.25.2</ecNumber>
    </recommendedName>
</protein>
<keyword id="KW-0021">Allosteric enzyme</keyword>
<keyword id="KW-0963">Cytoplasm</keyword>
<keyword id="KW-0378">Hydrolase</keyword>
<keyword id="KW-0479">Metal-binding</keyword>
<keyword id="KW-0645">Protease</keyword>
<keyword id="KW-0915">Sodium</keyword>
<keyword id="KW-0888">Threonine protease</keyword>
<dbReference type="EC" id="3.4.25.2" evidence="1"/>
<dbReference type="EMBL" id="CP000109">
    <property type="protein sequence ID" value="ABB41006.1"/>
    <property type="molecule type" value="Genomic_DNA"/>
</dbReference>
<dbReference type="SMR" id="Q31IL7"/>
<dbReference type="STRING" id="317025.Tcr_0410"/>
<dbReference type="MEROPS" id="T01.006"/>
<dbReference type="KEGG" id="tcx:Tcr_0410"/>
<dbReference type="eggNOG" id="COG5405">
    <property type="taxonomic scope" value="Bacteria"/>
</dbReference>
<dbReference type="HOGENOM" id="CLU_093872_1_0_6"/>
<dbReference type="OrthoDB" id="9804884at2"/>
<dbReference type="GO" id="GO:0009376">
    <property type="term" value="C:HslUV protease complex"/>
    <property type="evidence" value="ECO:0007669"/>
    <property type="project" value="UniProtKB-UniRule"/>
</dbReference>
<dbReference type="GO" id="GO:0005839">
    <property type="term" value="C:proteasome core complex"/>
    <property type="evidence" value="ECO:0007669"/>
    <property type="project" value="InterPro"/>
</dbReference>
<dbReference type="GO" id="GO:0046872">
    <property type="term" value="F:metal ion binding"/>
    <property type="evidence" value="ECO:0007669"/>
    <property type="project" value="UniProtKB-KW"/>
</dbReference>
<dbReference type="GO" id="GO:0004298">
    <property type="term" value="F:threonine-type endopeptidase activity"/>
    <property type="evidence" value="ECO:0007669"/>
    <property type="project" value="UniProtKB-KW"/>
</dbReference>
<dbReference type="GO" id="GO:0051603">
    <property type="term" value="P:proteolysis involved in protein catabolic process"/>
    <property type="evidence" value="ECO:0007669"/>
    <property type="project" value="InterPro"/>
</dbReference>
<dbReference type="CDD" id="cd01913">
    <property type="entry name" value="protease_HslV"/>
    <property type="match status" value="1"/>
</dbReference>
<dbReference type="FunFam" id="3.60.20.10:FF:000002">
    <property type="entry name" value="ATP-dependent protease subunit HslV"/>
    <property type="match status" value="1"/>
</dbReference>
<dbReference type="Gene3D" id="3.60.20.10">
    <property type="entry name" value="Glutamine Phosphoribosylpyrophosphate, subunit 1, domain 1"/>
    <property type="match status" value="1"/>
</dbReference>
<dbReference type="HAMAP" id="MF_00248">
    <property type="entry name" value="HslV"/>
    <property type="match status" value="1"/>
</dbReference>
<dbReference type="InterPro" id="IPR022281">
    <property type="entry name" value="ATP-dep_Prtase_HsIV_su"/>
</dbReference>
<dbReference type="InterPro" id="IPR029055">
    <property type="entry name" value="Ntn_hydrolases_N"/>
</dbReference>
<dbReference type="InterPro" id="IPR001353">
    <property type="entry name" value="Proteasome_sua/b"/>
</dbReference>
<dbReference type="InterPro" id="IPR023333">
    <property type="entry name" value="Proteasome_suB-type"/>
</dbReference>
<dbReference type="NCBIfam" id="TIGR03692">
    <property type="entry name" value="ATP_dep_HslV"/>
    <property type="match status" value="1"/>
</dbReference>
<dbReference type="NCBIfam" id="NF003964">
    <property type="entry name" value="PRK05456.1"/>
    <property type="match status" value="1"/>
</dbReference>
<dbReference type="PANTHER" id="PTHR32194:SF0">
    <property type="entry name" value="ATP-DEPENDENT PROTEASE SUBUNIT HSLV"/>
    <property type="match status" value="1"/>
</dbReference>
<dbReference type="PANTHER" id="PTHR32194">
    <property type="entry name" value="METALLOPROTEASE TLDD"/>
    <property type="match status" value="1"/>
</dbReference>
<dbReference type="Pfam" id="PF00227">
    <property type="entry name" value="Proteasome"/>
    <property type="match status" value="1"/>
</dbReference>
<dbReference type="PIRSF" id="PIRSF039093">
    <property type="entry name" value="HslV"/>
    <property type="match status" value="1"/>
</dbReference>
<dbReference type="SUPFAM" id="SSF56235">
    <property type="entry name" value="N-terminal nucleophile aminohydrolases (Ntn hydrolases)"/>
    <property type="match status" value="1"/>
</dbReference>
<dbReference type="PROSITE" id="PS51476">
    <property type="entry name" value="PROTEASOME_BETA_2"/>
    <property type="match status" value="1"/>
</dbReference>